<organism>
    <name type="scientific">Proteus mirabilis (strain HI4320)</name>
    <dbReference type="NCBI Taxonomy" id="529507"/>
    <lineage>
        <taxon>Bacteria</taxon>
        <taxon>Pseudomonadati</taxon>
        <taxon>Pseudomonadota</taxon>
        <taxon>Gammaproteobacteria</taxon>
        <taxon>Enterobacterales</taxon>
        <taxon>Morganellaceae</taxon>
        <taxon>Proteus</taxon>
    </lineage>
</organism>
<dbReference type="EMBL" id="AM942759">
    <property type="protein sequence ID" value="CAR42265.1"/>
    <property type="molecule type" value="Genomic_DNA"/>
</dbReference>
<dbReference type="RefSeq" id="WP_004242612.1">
    <property type="nucleotide sequence ID" value="NC_010554.1"/>
</dbReference>
<dbReference type="SMR" id="B4ETL2"/>
<dbReference type="EnsemblBacteria" id="CAR42265">
    <property type="protein sequence ID" value="CAR42265"/>
    <property type="gene ID" value="PMI1040"/>
</dbReference>
<dbReference type="GeneID" id="6802138"/>
<dbReference type="KEGG" id="pmr:PMI1040"/>
<dbReference type="eggNOG" id="COG0776">
    <property type="taxonomic scope" value="Bacteria"/>
</dbReference>
<dbReference type="HOGENOM" id="CLU_105066_1_3_6"/>
<dbReference type="Proteomes" id="UP000008319">
    <property type="component" value="Chromosome"/>
</dbReference>
<dbReference type="GO" id="GO:0005829">
    <property type="term" value="C:cytosol"/>
    <property type="evidence" value="ECO:0007669"/>
    <property type="project" value="TreeGrafter"/>
</dbReference>
<dbReference type="GO" id="GO:0003677">
    <property type="term" value="F:DNA binding"/>
    <property type="evidence" value="ECO:0007669"/>
    <property type="project" value="UniProtKB-UniRule"/>
</dbReference>
<dbReference type="GO" id="GO:0030527">
    <property type="term" value="F:structural constituent of chromatin"/>
    <property type="evidence" value="ECO:0007669"/>
    <property type="project" value="InterPro"/>
</dbReference>
<dbReference type="GO" id="GO:0006310">
    <property type="term" value="P:DNA recombination"/>
    <property type="evidence" value="ECO:0007669"/>
    <property type="project" value="UniProtKB-UniRule"/>
</dbReference>
<dbReference type="GO" id="GO:0009893">
    <property type="term" value="P:positive regulation of metabolic process"/>
    <property type="evidence" value="ECO:0007669"/>
    <property type="project" value="UniProtKB-ARBA"/>
</dbReference>
<dbReference type="GO" id="GO:0006355">
    <property type="term" value="P:regulation of DNA-templated transcription"/>
    <property type="evidence" value="ECO:0007669"/>
    <property type="project" value="UniProtKB-UniRule"/>
</dbReference>
<dbReference type="GO" id="GO:0006417">
    <property type="term" value="P:regulation of translation"/>
    <property type="evidence" value="ECO:0007669"/>
    <property type="project" value="UniProtKB-UniRule"/>
</dbReference>
<dbReference type="CDD" id="cd13835">
    <property type="entry name" value="IHF_A"/>
    <property type="match status" value="1"/>
</dbReference>
<dbReference type="FunFam" id="4.10.520.10:FF:000002">
    <property type="entry name" value="Integration host factor subunit alpha"/>
    <property type="match status" value="1"/>
</dbReference>
<dbReference type="Gene3D" id="4.10.520.10">
    <property type="entry name" value="IHF-like DNA-binding proteins"/>
    <property type="match status" value="1"/>
</dbReference>
<dbReference type="HAMAP" id="MF_00380">
    <property type="entry name" value="IHF_alpha"/>
    <property type="match status" value="1"/>
</dbReference>
<dbReference type="InterPro" id="IPR000119">
    <property type="entry name" value="Hist_DNA-bd"/>
</dbReference>
<dbReference type="InterPro" id="IPR020816">
    <property type="entry name" value="Histone-like_DNA-bd_CS"/>
</dbReference>
<dbReference type="InterPro" id="IPR010992">
    <property type="entry name" value="IHF-like_DNA-bd_dom_sf"/>
</dbReference>
<dbReference type="InterPro" id="IPR005684">
    <property type="entry name" value="IHF_alpha"/>
</dbReference>
<dbReference type="NCBIfam" id="TIGR00987">
    <property type="entry name" value="himA"/>
    <property type="match status" value="1"/>
</dbReference>
<dbReference type="NCBIfam" id="NF001401">
    <property type="entry name" value="PRK00285.1"/>
    <property type="match status" value="1"/>
</dbReference>
<dbReference type="PANTHER" id="PTHR33175">
    <property type="entry name" value="DNA-BINDING PROTEIN HU"/>
    <property type="match status" value="1"/>
</dbReference>
<dbReference type="PANTHER" id="PTHR33175:SF2">
    <property type="entry name" value="INTEGRATION HOST FACTOR SUBUNIT ALPHA"/>
    <property type="match status" value="1"/>
</dbReference>
<dbReference type="Pfam" id="PF00216">
    <property type="entry name" value="Bac_DNA_binding"/>
    <property type="match status" value="1"/>
</dbReference>
<dbReference type="PRINTS" id="PR01727">
    <property type="entry name" value="DNABINDINGHU"/>
</dbReference>
<dbReference type="SMART" id="SM00411">
    <property type="entry name" value="BHL"/>
    <property type="match status" value="1"/>
</dbReference>
<dbReference type="SUPFAM" id="SSF47729">
    <property type="entry name" value="IHF-like DNA-binding proteins"/>
    <property type="match status" value="1"/>
</dbReference>
<dbReference type="PROSITE" id="PS00045">
    <property type="entry name" value="HISTONE_LIKE"/>
    <property type="match status" value="1"/>
</dbReference>
<sequence length="98" mass="11134">MALTKAEMAENLFEKLGVSKRDAKDLVEAFFEEVRRSLENGEQVKLSGFGNFDLRDKNQRPGRNPKTGEDIPITARRVVTFRPGQKLKSRVENATPKE</sequence>
<name>IHFA_PROMH</name>
<protein>
    <recommendedName>
        <fullName evidence="1">Integration host factor subunit alpha</fullName>
        <shortName evidence="1">IHF-alpha</shortName>
    </recommendedName>
</protein>
<comment type="function">
    <text evidence="1">This protein is one of the two subunits of integration host factor, a specific DNA-binding protein that functions in genetic recombination as well as in transcriptional and translational control.</text>
</comment>
<comment type="subunit">
    <text evidence="1">Heterodimer of an alpha and a beta chain.</text>
</comment>
<comment type="similarity">
    <text evidence="1">Belongs to the bacterial histone-like protein family.</text>
</comment>
<feature type="chain" id="PRO_1000122153" description="Integration host factor subunit alpha">
    <location>
        <begin position="1"/>
        <end position="98"/>
    </location>
</feature>
<feature type="region of interest" description="Disordered" evidence="2">
    <location>
        <begin position="50"/>
        <end position="71"/>
    </location>
</feature>
<evidence type="ECO:0000255" key="1">
    <source>
        <dbReference type="HAMAP-Rule" id="MF_00380"/>
    </source>
</evidence>
<evidence type="ECO:0000256" key="2">
    <source>
        <dbReference type="SAM" id="MobiDB-lite"/>
    </source>
</evidence>
<keyword id="KW-0233">DNA recombination</keyword>
<keyword id="KW-0238">DNA-binding</keyword>
<keyword id="KW-1185">Reference proteome</keyword>
<keyword id="KW-0804">Transcription</keyword>
<keyword id="KW-0805">Transcription regulation</keyword>
<keyword id="KW-0810">Translation regulation</keyword>
<gene>
    <name evidence="1" type="primary">ihfA</name>
    <name evidence="1" type="synonym">himA</name>
    <name type="ordered locus">PMI1040</name>
</gene>
<proteinExistence type="inferred from homology"/>
<reference key="1">
    <citation type="journal article" date="2008" name="J. Bacteriol.">
        <title>Complete genome sequence of uropathogenic Proteus mirabilis, a master of both adherence and motility.</title>
        <authorList>
            <person name="Pearson M.M."/>
            <person name="Sebaihia M."/>
            <person name="Churcher C."/>
            <person name="Quail M.A."/>
            <person name="Seshasayee A.S."/>
            <person name="Luscombe N.M."/>
            <person name="Abdellah Z."/>
            <person name="Arrosmith C."/>
            <person name="Atkin B."/>
            <person name="Chillingworth T."/>
            <person name="Hauser H."/>
            <person name="Jagels K."/>
            <person name="Moule S."/>
            <person name="Mungall K."/>
            <person name="Norbertczak H."/>
            <person name="Rabbinowitsch E."/>
            <person name="Walker D."/>
            <person name="Whithead S."/>
            <person name="Thomson N.R."/>
            <person name="Rather P.N."/>
            <person name="Parkhill J."/>
            <person name="Mobley H.L.T."/>
        </authorList>
    </citation>
    <scope>NUCLEOTIDE SEQUENCE [LARGE SCALE GENOMIC DNA]</scope>
    <source>
        <strain>HI4320</strain>
    </source>
</reference>
<accession>B4ETL2</accession>